<name>KGUA_BRUA2</name>
<reference key="1">
    <citation type="journal article" date="2005" name="Infect. Immun.">
        <title>Whole-genome analyses of speciation events in pathogenic Brucellae.</title>
        <authorList>
            <person name="Chain P.S."/>
            <person name="Comerci D.J."/>
            <person name="Tolmasky M.E."/>
            <person name="Larimer F.W."/>
            <person name="Malfatti S.A."/>
            <person name="Vergez L.M."/>
            <person name="Aguero F."/>
            <person name="Land M.L."/>
            <person name="Ugalde R.A."/>
            <person name="Garcia E."/>
        </authorList>
    </citation>
    <scope>NUCLEOTIDE SEQUENCE [LARGE SCALE GENOMIC DNA]</scope>
    <source>
        <strain>2308</strain>
    </source>
</reference>
<accession>Q2YMJ2</accession>
<organism>
    <name type="scientific">Brucella abortus (strain 2308)</name>
    <dbReference type="NCBI Taxonomy" id="359391"/>
    <lineage>
        <taxon>Bacteria</taxon>
        <taxon>Pseudomonadati</taxon>
        <taxon>Pseudomonadota</taxon>
        <taxon>Alphaproteobacteria</taxon>
        <taxon>Hyphomicrobiales</taxon>
        <taxon>Brucellaceae</taxon>
        <taxon>Brucella/Ochrobactrum group</taxon>
        <taxon>Brucella</taxon>
    </lineage>
</organism>
<evidence type="ECO:0000255" key="1">
    <source>
        <dbReference type="HAMAP-Rule" id="MF_00328"/>
    </source>
</evidence>
<sequence length="220" mass="25223">MAISSVENGVARRGLMVVISSPSGAGKSTIARLLLEDPKMKLSLSISVTTRQRRPSEIDGVHYHFITIREFERLRDNDELIEWAEVHGNFYGTLRETAEIALADGQDMLFDIDWQGADQLQAKMPADVVSIFILPPTMRELQQRLNRRAEDTAEVIETRLQNARFEIQKWVKYDYIVINEDLDRSYAAIKSIINAERLRRDRRPGLFDFVTGLLEEDPGM</sequence>
<keyword id="KW-0067">ATP-binding</keyword>
<keyword id="KW-0963">Cytoplasm</keyword>
<keyword id="KW-0418">Kinase</keyword>
<keyword id="KW-0547">Nucleotide-binding</keyword>
<keyword id="KW-1185">Reference proteome</keyword>
<keyword id="KW-0808">Transferase</keyword>
<dbReference type="EC" id="2.7.4.8" evidence="1"/>
<dbReference type="EMBL" id="AM040264">
    <property type="protein sequence ID" value="CAJ10445.1"/>
    <property type="molecule type" value="Genomic_DNA"/>
</dbReference>
<dbReference type="RefSeq" id="WP_002963622.1">
    <property type="nucleotide sequence ID" value="NZ_KN046823.1"/>
</dbReference>
<dbReference type="SMR" id="Q2YMJ2"/>
<dbReference type="STRING" id="359391.BAB1_0489"/>
<dbReference type="GeneID" id="97534168"/>
<dbReference type="KEGG" id="bmf:BAB1_0489"/>
<dbReference type="HOGENOM" id="CLU_001715_1_0_5"/>
<dbReference type="PhylomeDB" id="Q2YMJ2"/>
<dbReference type="Proteomes" id="UP000002719">
    <property type="component" value="Chromosome I"/>
</dbReference>
<dbReference type="GO" id="GO:0005829">
    <property type="term" value="C:cytosol"/>
    <property type="evidence" value="ECO:0007669"/>
    <property type="project" value="TreeGrafter"/>
</dbReference>
<dbReference type="GO" id="GO:0005524">
    <property type="term" value="F:ATP binding"/>
    <property type="evidence" value="ECO:0007669"/>
    <property type="project" value="UniProtKB-UniRule"/>
</dbReference>
<dbReference type="GO" id="GO:0004385">
    <property type="term" value="F:guanylate kinase activity"/>
    <property type="evidence" value="ECO:0007669"/>
    <property type="project" value="UniProtKB-UniRule"/>
</dbReference>
<dbReference type="CDD" id="cd00071">
    <property type="entry name" value="GMPK"/>
    <property type="match status" value="1"/>
</dbReference>
<dbReference type="FunFam" id="3.30.63.10:FF:000005">
    <property type="entry name" value="Guanylate kinase"/>
    <property type="match status" value="1"/>
</dbReference>
<dbReference type="Gene3D" id="3.30.63.10">
    <property type="entry name" value="Guanylate Kinase phosphate binding domain"/>
    <property type="match status" value="1"/>
</dbReference>
<dbReference type="Gene3D" id="3.40.50.300">
    <property type="entry name" value="P-loop containing nucleotide triphosphate hydrolases"/>
    <property type="match status" value="1"/>
</dbReference>
<dbReference type="HAMAP" id="MF_00328">
    <property type="entry name" value="Guanylate_kinase"/>
    <property type="match status" value="1"/>
</dbReference>
<dbReference type="InterPro" id="IPR008145">
    <property type="entry name" value="GK/Ca_channel_bsu"/>
</dbReference>
<dbReference type="InterPro" id="IPR008144">
    <property type="entry name" value="Guanylate_kin-like_dom"/>
</dbReference>
<dbReference type="InterPro" id="IPR017665">
    <property type="entry name" value="Guanylate_kinase"/>
</dbReference>
<dbReference type="InterPro" id="IPR020590">
    <property type="entry name" value="Guanylate_kinase_CS"/>
</dbReference>
<dbReference type="InterPro" id="IPR027417">
    <property type="entry name" value="P-loop_NTPase"/>
</dbReference>
<dbReference type="NCBIfam" id="TIGR03263">
    <property type="entry name" value="guanyl_kin"/>
    <property type="match status" value="1"/>
</dbReference>
<dbReference type="PANTHER" id="PTHR23117:SF13">
    <property type="entry name" value="GUANYLATE KINASE"/>
    <property type="match status" value="1"/>
</dbReference>
<dbReference type="PANTHER" id="PTHR23117">
    <property type="entry name" value="GUANYLATE KINASE-RELATED"/>
    <property type="match status" value="1"/>
</dbReference>
<dbReference type="Pfam" id="PF00625">
    <property type="entry name" value="Guanylate_kin"/>
    <property type="match status" value="1"/>
</dbReference>
<dbReference type="SMART" id="SM00072">
    <property type="entry name" value="GuKc"/>
    <property type="match status" value="1"/>
</dbReference>
<dbReference type="SUPFAM" id="SSF52540">
    <property type="entry name" value="P-loop containing nucleoside triphosphate hydrolases"/>
    <property type="match status" value="1"/>
</dbReference>
<dbReference type="PROSITE" id="PS00856">
    <property type="entry name" value="GUANYLATE_KINASE_1"/>
    <property type="match status" value="1"/>
</dbReference>
<dbReference type="PROSITE" id="PS50052">
    <property type="entry name" value="GUANYLATE_KINASE_2"/>
    <property type="match status" value="1"/>
</dbReference>
<protein>
    <recommendedName>
        <fullName evidence="1">Guanylate kinase</fullName>
        <ecNumber evidence="1">2.7.4.8</ecNumber>
    </recommendedName>
    <alternativeName>
        <fullName evidence="1">GMP kinase</fullName>
    </alternativeName>
</protein>
<comment type="function">
    <text evidence="1">Essential for recycling GMP and indirectly, cGMP.</text>
</comment>
<comment type="catalytic activity">
    <reaction evidence="1">
        <text>GMP + ATP = GDP + ADP</text>
        <dbReference type="Rhea" id="RHEA:20780"/>
        <dbReference type="ChEBI" id="CHEBI:30616"/>
        <dbReference type="ChEBI" id="CHEBI:58115"/>
        <dbReference type="ChEBI" id="CHEBI:58189"/>
        <dbReference type="ChEBI" id="CHEBI:456216"/>
        <dbReference type="EC" id="2.7.4.8"/>
    </reaction>
</comment>
<comment type="subcellular location">
    <subcellularLocation>
        <location evidence="1">Cytoplasm</location>
    </subcellularLocation>
</comment>
<comment type="similarity">
    <text evidence="1">Belongs to the guanylate kinase family.</text>
</comment>
<proteinExistence type="inferred from homology"/>
<feature type="chain" id="PRO_0000266294" description="Guanylate kinase">
    <location>
        <begin position="1"/>
        <end position="220"/>
    </location>
</feature>
<feature type="domain" description="Guanylate kinase-like" evidence="1">
    <location>
        <begin position="14"/>
        <end position="194"/>
    </location>
</feature>
<feature type="binding site" evidence="1">
    <location>
        <begin position="21"/>
        <end position="28"/>
    </location>
    <ligand>
        <name>ATP</name>
        <dbReference type="ChEBI" id="CHEBI:30616"/>
    </ligand>
</feature>
<gene>
    <name evidence="1" type="primary">gmk</name>
    <name type="ordered locus">BAB1_0489</name>
</gene>